<protein>
    <recommendedName>
        <fullName evidence="1">Urease accessory protein UreE</fullName>
    </recommendedName>
</protein>
<dbReference type="EMBL" id="CP000316">
    <property type="protein sequence ID" value="ABE43298.1"/>
    <property type="molecule type" value="Genomic_DNA"/>
</dbReference>
<dbReference type="RefSeq" id="WP_011482297.1">
    <property type="nucleotide sequence ID" value="NC_007948.1"/>
</dbReference>
<dbReference type="SMR" id="Q12DU4"/>
<dbReference type="STRING" id="296591.Bpro_1349"/>
<dbReference type="KEGG" id="pol:Bpro_1349"/>
<dbReference type="eggNOG" id="COG2371">
    <property type="taxonomic scope" value="Bacteria"/>
</dbReference>
<dbReference type="HOGENOM" id="CLU_093757_0_0_4"/>
<dbReference type="OrthoDB" id="5421304at2"/>
<dbReference type="Proteomes" id="UP000001983">
    <property type="component" value="Chromosome"/>
</dbReference>
<dbReference type="GO" id="GO:0005737">
    <property type="term" value="C:cytoplasm"/>
    <property type="evidence" value="ECO:0007669"/>
    <property type="project" value="UniProtKB-SubCell"/>
</dbReference>
<dbReference type="GO" id="GO:0016151">
    <property type="term" value="F:nickel cation binding"/>
    <property type="evidence" value="ECO:0007669"/>
    <property type="project" value="UniProtKB-UniRule"/>
</dbReference>
<dbReference type="GO" id="GO:0051082">
    <property type="term" value="F:unfolded protein binding"/>
    <property type="evidence" value="ECO:0007669"/>
    <property type="project" value="UniProtKB-UniRule"/>
</dbReference>
<dbReference type="GO" id="GO:0006457">
    <property type="term" value="P:protein folding"/>
    <property type="evidence" value="ECO:0007669"/>
    <property type="project" value="InterPro"/>
</dbReference>
<dbReference type="GO" id="GO:0065003">
    <property type="term" value="P:protein-containing complex assembly"/>
    <property type="evidence" value="ECO:0007669"/>
    <property type="project" value="InterPro"/>
</dbReference>
<dbReference type="GO" id="GO:0019627">
    <property type="term" value="P:urea metabolic process"/>
    <property type="evidence" value="ECO:0007669"/>
    <property type="project" value="InterPro"/>
</dbReference>
<dbReference type="CDD" id="cd00571">
    <property type="entry name" value="UreE"/>
    <property type="match status" value="1"/>
</dbReference>
<dbReference type="Gene3D" id="2.60.260.20">
    <property type="entry name" value="Urease metallochaperone UreE, N-terminal domain"/>
    <property type="match status" value="1"/>
</dbReference>
<dbReference type="Gene3D" id="3.30.70.790">
    <property type="entry name" value="UreE, C-terminal domain"/>
    <property type="match status" value="1"/>
</dbReference>
<dbReference type="HAMAP" id="MF_00822">
    <property type="entry name" value="UreE"/>
    <property type="match status" value="1"/>
</dbReference>
<dbReference type="InterPro" id="IPR012406">
    <property type="entry name" value="UreE"/>
</dbReference>
<dbReference type="InterPro" id="IPR007864">
    <property type="entry name" value="UreE_C_dom"/>
</dbReference>
<dbReference type="InterPro" id="IPR004029">
    <property type="entry name" value="UreE_N"/>
</dbReference>
<dbReference type="InterPro" id="IPR036118">
    <property type="entry name" value="UreE_N_sf"/>
</dbReference>
<dbReference type="NCBIfam" id="NF009751">
    <property type="entry name" value="PRK13261.1-1"/>
    <property type="match status" value="1"/>
</dbReference>
<dbReference type="NCBIfam" id="NF009762">
    <property type="entry name" value="PRK13263.1"/>
    <property type="match status" value="1"/>
</dbReference>
<dbReference type="Pfam" id="PF05194">
    <property type="entry name" value="UreE_C"/>
    <property type="match status" value="1"/>
</dbReference>
<dbReference type="Pfam" id="PF02814">
    <property type="entry name" value="UreE_N"/>
    <property type="match status" value="1"/>
</dbReference>
<dbReference type="SMART" id="SM00988">
    <property type="entry name" value="UreE_N"/>
    <property type="match status" value="1"/>
</dbReference>
<dbReference type="SUPFAM" id="SSF69737">
    <property type="entry name" value="Urease metallochaperone UreE, C-terminal domain"/>
    <property type="match status" value="1"/>
</dbReference>
<dbReference type="SUPFAM" id="SSF69287">
    <property type="entry name" value="Urease metallochaperone UreE, N-terminal domain"/>
    <property type="match status" value="1"/>
</dbReference>
<feature type="chain" id="PRO_1000083903" description="Urease accessory protein UreE">
    <location>
        <begin position="1"/>
        <end position="220"/>
    </location>
</feature>
<feature type="region of interest" description="Disordered" evidence="2">
    <location>
        <begin position="145"/>
        <end position="220"/>
    </location>
</feature>
<feature type="compositionally biased region" description="Basic and acidic residues" evidence="2">
    <location>
        <begin position="156"/>
        <end position="177"/>
    </location>
</feature>
<feature type="compositionally biased region" description="Low complexity" evidence="2">
    <location>
        <begin position="178"/>
        <end position="188"/>
    </location>
</feature>
<feature type="compositionally biased region" description="Basic and acidic residues" evidence="2">
    <location>
        <begin position="191"/>
        <end position="206"/>
    </location>
</feature>
<proteinExistence type="inferred from homology"/>
<reference key="1">
    <citation type="journal article" date="2008" name="Appl. Environ. Microbiol.">
        <title>The genome of Polaromonas sp. strain JS666: insights into the evolution of a hydrocarbon- and xenobiotic-degrading bacterium, and features of relevance to biotechnology.</title>
        <authorList>
            <person name="Mattes T.E."/>
            <person name="Alexander A.K."/>
            <person name="Richardson P.M."/>
            <person name="Munk A.C."/>
            <person name="Han C.S."/>
            <person name="Stothard P."/>
            <person name="Coleman N.V."/>
        </authorList>
    </citation>
    <scope>NUCLEOTIDE SEQUENCE [LARGE SCALE GENOMIC DNA]</scope>
    <source>
        <strain>JS666 / ATCC BAA-500</strain>
    </source>
</reference>
<gene>
    <name evidence="1" type="primary">ureE</name>
    <name type="ordered locus">Bpro_1349</name>
</gene>
<comment type="function">
    <text evidence="1">Involved in urease metallocenter assembly. Binds nickel. Probably functions as a nickel donor during metallocenter assembly.</text>
</comment>
<comment type="subcellular location">
    <subcellularLocation>
        <location evidence="1">Cytoplasm</location>
    </subcellularLocation>
</comment>
<comment type="similarity">
    <text evidence="1">Belongs to the UreE family.</text>
</comment>
<accession>Q12DU4</accession>
<name>UREE_POLSJ</name>
<evidence type="ECO:0000255" key="1">
    <source>
        <dbReference type="HAMAP-Rule" id="MF_00822"/>
    </source>
</evidence>
<evidence type="ECO:0000256" key="2">
    <source>
        <dbReference type="SAM" id="MobiDB-lite"/>
    </source>
</evidence>
<sequence>MIQVSKVIPQGAGLAPVLVKRASTVELDWDVRQKSRFDATDSLGRTLGVFLPRGTLVRGGDVLVAEDGSMIKVIASPQPVLRITACSAHGSPFDLTRAAYHLGNRHVPIELKPDHLKIEPDHVLADMLRAMHLIVHEVEEAFEPEGGAYSAGGHGHGHDHGSHEHSAHDHGKHDHAPAKPATAATPAAHVHGPDCNHGHDHAHEAKPATIQIHKRRPDNL</sequence>
<organism>
    <name type="scientific">Polaromonas sp. (strain JS666 / ATCC BAA-500)</name>
    <dbReference type="NCBI Taxonomy" id="296591"/>
    <lineage>
        <taxon>Bacteria</taxon>
        <taxon>Pseudomonadati</taxon>
        <taxon>Pseudomonadota</taxon>
        <taxon>Betaproteobacteria</taxon>
        <taxon>Burkholderiales</taxon>
        <taxon>Comamonadaceae</taxon>
        <taxon>Polaromonas</taxon>
    </lineage>
</organism>
<keyword id="KW-0143">Chaperone</keyword>
<keyword id="KW-0963">Cytoplasm</keyword>
<keyword id="KW-0533">Nickel</keyword>
<keyword id="KW-0996">Nickel insertion</keyword>
<keyword id="KW-1185">Reference proteome</keyword>